<gene>
    <name type="ORF">SPBC651.04</name>
</gene>
<protein>
    <recommendedName>
        <fullName>Uncharacterized protein C651.04</fullName>
    </recommendedName>
</protein>
<sequence>MSSAELGKLHIYASPEQWEKWSPRWKSIVFRTQYESIFKNPKHHGEKKPFHCLFKLAGTMKSISLSHLDIPEHRMSNAVAFPITTSTTPMQLDVTLQFRGHKIPLVVGEASVSLEDIFTHGTVESVIPLFMKKRHPEAYLRIKLVYTRSKRKSARKHKVPSSFHRFSGRRGLGIHYNHSGSQSSLITLPLPQKQPDFLRMNNDTNELKTNGFEPIRFVFTTTPYSPASFEVPKTLKT</sequence>
<name>YBW4_SCHPO</name>
<accession>O94662</accession>
<feature type="chain" id="PRO_0000116525" description="Uncharacterized protein C651.04">
    <location>
        <begin position="1"/>
        <end position="237"/>
    </location>
</feature>
<dbReference type="EMBL" id="CU329671">
    <property type="protein sequence ID" value="CAB37600.1"/>
    <property type="molecule type" value="Genomic_DNA"/>
</dbReference>
<dbReference type="PIR" id="T40603">
    <property type="entry name" value="T40603"/>
</dbReference>
<dbReference type="RefSeq" id="NP_595502.1">
    <property type="nucleotide sequence ID" value="NM_001021412.2"/>
</dbReference>
<dbReference type="BioGRID" id="277615">
    <property type="interactions" value="38"/>
</dbReference>
<dbReference type="iPTMnet" id="O94662"/>
<dbReference type="PaxDb" id="4896-SPBC651.04.1"/>
<dbReference type="EnsemblFungi" id="SPBC651.04.1">
    <property type="protein sequence ID" value="SPBC651.04.1:pep"/>
    <property type="gene ID" value="SPBC651.04"/>
</dbReference>
<dbReference type="KEGG" id="spo:2541100"/>
<dbReference type="PomBase" id="SPBC651.04"/>
<dbReference type="VEuPathDB" id="FungiDB:SPBC651.04"/>
<dbReference type="HOGENOM" id="CLU_1190476_0_0_1"/>
<dbReference type="InParanoid" id="O94662"/>
<dbReference type="OMA" id="CVPLSHM"/>
<dbReference type="PRO" id="PR:O94662"/>
<dbReference type="Proteomes" id="UP000002485">
    <property type="component" value="Chromosome II"/>
</dbReference>
<proteinExistence type="predicted"/>
<reference key="1">
    <citation type="journal article" date="2002" name="Nature">
        <title>The genome sequence of Schizosaccharomyces pombe.</title>
        <authorList>
            <person name="Wood V."/>
            <person name="Gwilliam R."/>
            <person name="Rajandream M.A."/>
            <person name="Lyne M.H."/>
            <person name="Lyne R."/>
            <person name="Stewart A."/>
            <person name="Sgouros J.G."/>
            <person name="Peat N."/>
            <person name="Hayles J."/>
            <person name="Baker S.G."/>
            <person name="Basham D."/>
            <person name="Bowman S."/>
            <person name="Brooks K."/>
            <person name="Brown D."/>
            <person name="Brown S."/>
            <person name="Chillingworth T."/>
            <person name="Churcher C.M."/>
            <person name="Collins M."/>
            <person name="Connor R."/>
            <person name="Cronin A."/>
            <person name="Davis P."/>
            <person name="Feltwell T."/>
            <person name="Fraser A."/>
            <person name="Gentles S."/>
            <person name="Goble A."/>
            <person name="Hamlin N."/>
            <person name="Harris D.E."/>
            <person name="Hidalgo J."/>
            <person name="Hodgson G."/>
            <person name="Holroyd S."/>
            <person name="Hornsby T."/>
            <person name="Howarth S."/>
            <person name="Huckle E.J."/>
            <person name="Hunt S."/>
            <person name="Jagels K."/>
            <person name="James K.D."/>
            <person name="Jones L."/>
            <person name="Jones M."/>
            <person name="Leather S."/>
            <person name="McDonald S."/>
            <person name="McLean J."/>
            <person name="Mooney P."/>
            <person name="Moule S."/>
            <person name="Mungall K.L."/>
            <person name="Murphy L.D."/>
            <person name="Niblett D."/>
            <person name="Odell C."/>
            <person name="Oliver K."/>
            <person name="O'Neil S."/>
            <person name="Pearson D."/>
            <person name="Quail M.A."/>
            <person name="Rabbinowitsch E."/>
            <person name="Rutherford K.M."/>
            <person name="Rutter S."/>
            <person name="Saunders D."/>
            <person name="Seeger K."/>
            <person name="Sharp S."/>
            <person name="Skelton J."/>
            <person name="Simmonds M.N."/>
            <person name="Squares R."/>
            <person name="Squares S."/>
            <person name="Stevens K."/>
            <person name="Taylor K."/>
            <person name="Taylor R.G."/>
            <person name="Tivey A."/>
            <person name="Walsh S.V."/>
            <person name="Warren T."/>
            <person name="Whitehead S."/>
            <person name="Woodward J.R."/>
            <person name="Volckaert G."/>
            <person name="Aert R."/>
            <person name="Robben J."/>
            <person name="Grymonprez B."/>
            <person name="Weltjens I."/>
            <person name="Vanstreels E."/>
            <person name="Rieger M."/>
            <person name="Schaefer M."/>
            <person name="Mueller-Auer S."/>
            <person name="Gabel C."/>
            <person name="Fuchs M."/>
            <person name="Duesterhoeft A."/>
            <person name="Fritzc C."/>
            <person name="Holzer E."/>
            <person name="Moestl D."/>
            <person name="Hilbert H."/>
            <person name="Borzym K."/>
            <person name="Langer I."/>
            <person name="Beck A."/>
            <person name="Lehrach H."/>
            <person name="Reinhardt R."/>
            <person name="Pohl T.M."/>
            <person name="Eger P."/>
            <person name="Zimmermann W."/>
            <person name="Wedler H."/>
            <person name="Wambutt R."/>
            <person name="Purnelle B."/>
            <person name="Goffeau A."/>
            <person name="Cadieu E."/>
            <person name="Dreano S."/>
            <person name="Gloux S."/>
            <person name="Lelaure V."/>
            <person name="Mottier S."/>
            <person name="Galibert F."/>
            <person name="Aves S.J."/>
            <person name="Xiang Z."/>
            <person name="Hunt C."/>
            <person name="Moore K."/>
            <person name="Hurst S.M."/>
            <person name="Lucas M."/>
            <person name="Rochet M."/>
            <person name="Gaillardin C."/>
            <person name="Tallada V.A."/>
            <person name="Garzon A."/>
            <person name="Thode G."/>
            <person name="Daga R.R."/>
            <person name="Cruzado L."/>
            <person name="Jimenez J."/>
            <person name="Sanchez M."/>
            <person name="del Rey F."/>
            <person name="Benito J."/>
            <person name="Dominguez A."/>
            <person name="Revuelta J.L."/>
            <person name="Moreno S."/>
            <person name="Armstrong J."/>
            <person name="Forsburg S.L."/>
            <person name="Cerutti L."/>
            <person name="Lowe T."/>
            <person name="McCombie W.R."/>
            <person name="Paulsen I."/>
            <person name="Potashkin J."/>
            <person name="Shpakovski G.V."/>
            <person name="Ussery D."/>
            <person name="Barrell B.G."/>
            <person name="Nurse P."/>
        </authorList>
    </citation>
    <scope>NUCLEOTIDE SEQUENCE [LARGE SCALE GENOMIC DNA]</scope>
    <source>
        <strain>972 / ATCC 24843</strain>
    </source>
</reference>
<organism>
    <name type="scientific">Schizosaccharomyces pombe (strain 972 / ATCC 24843)</name>
    <name type="common">Fission yeast</name>
    <dbReference type="NCBI Taxonomy" id="284812"/>
    <lineage>
        <taxon>Eukaryota</taxon>
        <taxon>Fungi</taxon>
        <taxon>Dikarya</taxon>
        <taxon>Ascomycota</taxon>
        <taxon>Taphrinomycotina</taxon>
        <taxon>Schizosaccharomycetes</taxon>
        <taxon>Schizosaccharomycetales</taxon>
        <taxon>Schizosaccharomycetaceae</taxon>
        <taxon>Schizosaccharomyces</taxon>
    </lineage>
</organism>
<keyword id="KW-1185">Reference proteome</keyword>